<proteinExistence type="inferred from homology"/>
<feature type="chain" id="PRO_0000237559" description="L-lactate dehydrogenase 1">
    <location>
        <begin position="1"/>
        <end position="317"/>
    </location>
</feature>
<feature type="active site" description="Proton acceptor" evidence="2">
    <location>
        <position position="179"/>
    </location>
</feature>
<feature type="binding site" evidence="2">
    <location>
        <position position="17"/>
    </location>
    <ligand>
        <name>NAD(+)</name>
        <dbReference type="ChEBI" id="CHEBI:57540"/>
    </ligand>
</feature>
<feature type="binding site" evidence="2">
    <location>
        <position position="38"/>
    </location>
    <ligand>
        <name>NAD(+)</name>
        <dbReference type="ChEBI" id="CHEBI:57540"/>
    </ligand>
</feature>
<feature type="binding site" evidence="2">
    <location>
        <position position="43"/>
    </location>
    <ligand>
        <name>NAD(+)</name>
        <dbReference type="ChEBI" id="CHEBI:57540"/>
    </ligand>
</feature>
<feature type="binding site" evidence="2">
    <location>
        <position position="69"/>
    </location>
    <ligand>
        <name>NAD(+)</name>
        <dbReference type="ChEBI" id="CHEBI:57540"/>
    </ligand>
</feature>
<feature type="binding site" evidence="2">
    <location>
        <begin position="83"/>
        <end position="84"/>
    </location>
    <ligand>
        <name>NAD(+)</name>
        <dbReference type="ChEBI" id="CHEBI:57540"/>
    </ligand>
</feature>
<feature type="binding site" evidence="2">
    <location>
        <position position="86"/>
    </location>
    <ligand>
        <name>substrate</name>
    </ligand>
</feature>
<feature type="binding site" evidence="2">
    <location>
        <position position="92"/>
    </location>
    <ligand>
        <name>substrate</name>
    </ligand>
</feature>
<feature type="binding site" evidence="2">
    <location>
        <position position="105"/>
    </location>
    <ligand>
        <name>NAD(+)</name>
        <dbReference type="ChEBI" id="CHEBI:57540"/>
    </ligand>
</feature>
<feature type="binding site" evidence="2">
    <location>
        <begin position="122"/>
        <end position="124"/>
    </location>
    <ligand>
        <name>NAD(+)</name>
        <dbReference type="ChEBI" id="CHEBI:57540"/>
    </ligand>
</feature>
<feature type="binding site" evidence="2">
    <location>
        <begin position="124"/>
        <end position="127"/>
    </location>
    <ligand>
        <name>substrate</name>
    </ligand>
</feature>
<feature type="binding site" evidence="2">
    <location>
        <position position="147"/>
    </location>
    <ligand>
        <name>NAD(+)</name>
        <dbReference type="ChEBI" id="CHEBI:57540"/>
    </ligand>
</feature>
<feature type="binding site" evidence="2">
    <location>
        <begin position="152"/>
        <end position="155"/>
    </location>
    <ligand>
        <name>substrate</name>
    </ligand>
</feature>
<feature type="binding site" evidence="2">
    <location>
        <position position="232"/>
    </location>
    <ligand>
        <name>substrate</name>
    </ligand>
</feature>
<feature type="modified residue" description="Phosphotyrosine" evidence="2">
    <location>
        <position position="223"/>
    </location>
</feature>
<reference key="1">
    <citation type="journal article" date="2006" name="Lancet">
        <title>Complete genome sequence of USA300, an epidemic clone of community-acquired meticillin-resistant Staphylococcus aureus.</title>
        <authorList>
            <person name="Diep B.A."/>
            <person name="Gill S.R."/>
            <person name="Chang R.F."/>
            <person name="Phan T.H."/>
            <person name="Chen J.H."/>
            <person name="Davidson M.G."/>
            <person name="Lin F."/>
            <person name="Lin J."/>
            <person name="Carleton H.A."/>
            <person name="Mongodin E.F."/>
            <person name="Sensabaugh G.F."/>
            <person name="Perdreau-Remington F."/>
        </authorList>
    </citation>
    <scope>NUCLEOTIDE SEQUENCE [LARGE SCALE GENOMIC DNA]</scope>
    <source>
        <strain>USA300</strain>
    </source>
</reference>
<gene>
    <name evidence="2" type="primary">ldh1</name>
    <name type="ordered locus">SAUSA300_0235</name>
</gene>
<protein>
    <recommendedName>
        <fullName evidence="2">L-lactate dehydrogenase 1</fullName>
        <shortName evidence="2">L-LDH 1</shortName>
        <ecNumber evidence="2">1.1.1.27</ecNumber>
    </recommendedName>
</protein>
<organism>
    <name type="scientific">Staphylococcus aureus (strain USA300)</name>
    <dbReference type="NCBI Taxonomy" id="367830"/>
    <lineage>
        <taxon>Bacteria</taxon>
        <taxon>Bacillati</taxon>
        <taxon>Bacillota</taxon>
        <taxon>Bacilli</taxon>
        <taxon>Bacillales</taxon>
        <taxon>Staphylococcaceae</taxon>
        <taxon>Staphylococcus</taxon>
    </lineage>
</organism>
<comment type="function">
    <text evidence="1 2">Catalyzes the conversion of lactate to pyruvate (Potential). Appears to be the primary factor that allows S.aureus growth during nitrosative stress in both aerobically and anaerobically cultured cells (By similarity).</text>
</comment>
<comment type="catalytic activity">
    <reaction evidence="2">
        <text>(S)-lactate + NAD(+) = pyruvate + NADH + H(+)</text>
        <dbReference type="Rhea" id="RHEA:23444"/>
        <dbReference type="ChEBI" id="CHEBI:15361"/>
        <dbReference type="ChEBI" id="CHEBI:15378"/>
        <dbReference type="ChEBI" id="CHEBI:16651"/>
        <dbReference type="ChEBI" id="CHEBI:57540"/>
        <dbReference type="ChEBI" id="CHEBI:57945"/>
        <dbReference type="EC" id="1.1.1.27"/>
    </reaction>
</comment>
<comment type="pathway">
    <text evidence="2">Fermentation; pyruvate fermentation to lactate; (S)-lactate from pyruvate: step 1/1.</text>
</comment>
<comment type="subunit">
    <text evidence="2">Homotetramer.</text>
</comment>
<comment type="subcellular location">
    <subcellularLocation>
        <location evidence="2">Cytoplasm</location>
    </subcellularLocation>
</comment>
<comment type="similarity">
    <text evidence="2 3">Belongs to the LDH/MDH superfamily. LDH family.</text>
</comment>
<comment type="sequence caution" evidence="3">
    <conflict type="erroneous initiation">
        <sequence resource="EMBL-CDS" id="ABD22054"/>
    </conflict>
</comment>
<dbReference type="EC" id="1.1.1.27" evidence="2"/>
<dbReference type="EMBL" id="CP000255">
    <property type="protein sequence ID" value="ABD22054.1"/>
    <property type="status" value="ALT_INIT"/>
    <property type="molecule type" value="Genomic_DNA"/>
</dbReference>
<dbReference type="RefSeq" id="WP_001031882.1">
    <property type="nucleotide sequence ID" value="NZ_CP027476.1"/>
</dbReference>
<dbReference type="SMR" id="Q2FK29"/>
<dbReference type="KEGG" id="saa:SAUSA300_0235"/>
<dbReference type="HOGENOM" id="CLU_045401_1_1_9"/>
<dbReference type="OMA" id="THLDSMR"/>
<dbReference type="UniPathway" id="UPA00554">
    <property type="reaction ID" value="UER00611"/>
</dbReference>
<dbReference type="Proteomes" id="UP000001939">
    <property type="component" value="Chromosome"/>
</dbReference>
<dbReference type="GO" id="GO:0005737">
    <property type="term" value="C:cytoplasm"/>
    <property type="evidence" value="ECO:0007669"/>
    <property type="project" value="UniProtKB-SubCell"/>
</dbReference>
<dbReference type="GO" id="GO:0004459">
    <property type="term" value="F:L-lactate dehydrogenase activity"/>
    <property type="evidence" value="ECO:0007669"/>
    <property type="project" value="UniProtKB-UniRule"/>
</dbReference>
<dbReference type="GO" id="GO:0006096">
    <property type="term" value="P:glycolytic process"/>
    <property type="evidence" value="ECO:0007669"/>
    <property type="project" value="UniProtKB-UniRule"/>
</dbReference>
<dbReference type="GO" id="GO:0006089">
    <property type="term" value="P:lactate metabolic process"/>
    <property type="evidence" value="ECO:0007669"/>
    <property type="project" value="TreeGrafter"/>
</dbReference>
<dbReference type="CDD" id="cd05291">
    <property type="entry name" value="HicDH_like"/>
    <property type="match status" value="1"/>
</dbReference>
<dbReference type="FunFam" id="3.40.50.720:FF:000018">
    <property type="entry name" value="Malate dehydrogenase"/>
    <property type="match status" value="1"/>
</dbReference>
<dbReference type="Gene3D" id="3.90.110.10">
    <property type="entry name" value="Lactate dehydrogenase/glycoside hydrolase, family 4, C-terminal"/>
    <property type="match status" value="1"/>
</dbReference>
<dbReference type="Gene3D" id="3.40.50.720">
    <property type="entry name" value="NAD(P)-binding Rossmann-like Domain"/>
    <property type="match status" value="1"/>
</dbReference>
<dbReference type="HAMAP" id="MF_00488">
    <property type="entry name" value="Lactate_dehydrog"/>
    <property type="match status" value="1"/>
</dbReference>
<dbReference type="InterPro" id="IPR001557">
    <property type="entry name" value="L-lactate/malate_DH"/>
</dbReference>
<dbReference type="InterPro" id="IPR011304">
    <property type="entry name" value="L-lactate_DH"/>
</dbReference>
<dbReference type="InterPro" id="IPR018177">
    <property type="entry name" value="L-lactate_DH_AS"/>
</dbReference>
<dbReference type="InterPro" id="IPR022383">
    <property type="entry name" value="Lactate/malate_DH_C"/>
</dbReference>
<dbReference type="InterPro" id="IPR001236">
    <property type="entry name" value="Lactate/malate_DH_N"/>
</dbReference>
<dbReference type="InterPro" id="IPR015955">
    <property type="entry name" value="Lactate_DH/Glyco_Ohase_4_C"/>
</dbReference>
<dbReference type="InterPro" id="IPR036291">
    <property type="entry name" value="NAD(P)-bd_dom_sf"/>
</dbReference>
<dbReference type="NCBIfam" id="TIGR01771">
    <property type="entry name" value="L-LDH-NAD"/>
    <property type="match status" value="1"/>
</dbReference>
<dbReference type="NCBIfam" id="NF000824">
    <property type="entry name" value="PRK00066.1"/>
    <property type="match status" value="1"/>
</dbReference>
<dbReference type="NCBIfam" id="NF004863">
    <property type="entry name" value="PRK06223.1"/>
    <property type="match status" value="1"/>
</dbReference>
<dbReference type="PANTHER" id="PTHR43128">
    <property type="entry name" value="L-2-HYDROXYCARBOXYLATE DEHYDROGENASE (NAD(P)(+))"/>
    <property type="match status" value="1"/>
</dbReference>
<dbReference type="PANTHER" id="PTHR43128:SF16">
    <property type="entry name" value="L-LACTATE DEHYDROGENASE"/>
    <property type="match status" value="1"/>
</dbReference>
<dbReference type="Pfam" id="PF02866">
    <property type="entry name" value="Ldh_1_C"/>
    <property type="match status" value="1"/>
</dbReference>
<dbReference type="Pfam" id="PF00056">
    <property type="entry name" value="Ldh_1_N"/>
    <property type="match status" value="1"/>
</dbReference>
<dbReference type="PIRSF" id="PIRSF000102">
    <property type="entry name" value="Lac_mal_DH"/>
    <property type="match status" value="1"/>
</dbReference>
<dbReference type="PRINTS" id="PR00086">
    <property type="entry name" value="LLDHDRGNASE"/>
</dbReference>
<dbReference type="SUPFAM" id="SSF56327">
    <property type="entry name" value="LDH C-terminal domain-like"/>
    <property type="match status" value="1"/>
</dbReference>
<dbReference type="SUPFAM" id="SSF51735">
    <property type="entry name" value="NAD(P)-binding Rossmann-fold domains"/>
    <property type="match status" value="1"/>
</dbReference>
<dbReference type="PROSITE" id="PS00064">
    <property type="entry name" value="L_LDH"/>
    <property type="match status" value="1"/>
</dbReference>
<evidence type="ECO:0000250" key="1">
    <source>
        <dbReference type="UniProtKB" id="Q5HJD7"/>
    </source>
</evidence>
<evidence type="ECO:0000255" key="2">
    <source>
        <dbReference type="HAMAP-Rule" id="MF_00488"/>
    </source>
</evidence>
<evidence type="ECO:0000305" key="3"/>
<name>LDH1_STAA3</name>
<keyword id="KW-0963">Cytoplasm</keyword>
<keyword id="KW-0520">NAD</keyword>
<keyword id="KW-0560">Oxidoreductase</keyword>
<keyword id="KW-0597">Phosphoprotein</keyword>
<keyword id="KW-0346">Stress response</keyword>
<accession>Q2FK29</accession>
<sequence length="317" mass="34583">MNKFKGNKVVLIGNGAVGSSYAFSLVNQSIVDELVIIDLDTEKVRGDVMDLKHATPYSPTTVRVKAGEYSDCHDADLVVICAGAAQKPGETRLDLVSKNLKIFKSIVGEVMASKFDGIFLVATNPVDILAYATWKFSGLPKERVIGSGTILDSARFRLLLSEAFDVAPRSVDAQIIGEHGDTELPVWSHANIAGQPLKTLLEQRPEGKAQIEQIFVQTRDAAYDIIQAKGATYYGVAMGLARITEAIFRNEDAVLTVSALLEGEYEEEDVYIGVPAVINRNGIRNVVEIPLNDEEQSKFAHSAKTLKDIMAEAEELK</sequence>